<evidence type="ECO:0000255" key="1">
    <source>
        <dbReference type="HAMAP-Rule" id="MF_00116"/>
    </source>
</evidence>
<dbReference type="EC" id="3.6.1.23" evidence="1"/>
<dbReference type="EMBL" id="CP000243">
    <property type="protein sequence ID" value="ABE09612.1"/>
    <property type="molecule type" value="Genomic_DNA"/>
</dbReference>
<dbReference type="RefSeq" id="WP_000976066.1">
    <property type="nucleotide sequence ID" value="NZ_CP064825.1"/>
</dbReference>
<dbReference type="SMR" id="Q1R4V2"/>
<dbReference type="KEGG" id="eci:UTI89_C4184"/>
<dbReference type="HOGENOM" id="CLU_068508_1_1_6"/>
<dbReference type="UniPathway" id="UPA00610">
    <property type="reaction ID" value="UER00666"/>
</dbReference>
<dbReference type="Proteomes" id="UP000001952">
    <property type="component" value="Chromosome"/>
</dbReference>
<dbReference type="GO" id="GO:0004170">
    <property type="term" value="F:dUTP diphosphatase activity"/>
    <property type="evidence" value="ECO:0007669"/>
    <property type="project" value="UniProtKB-UniRule"/>
</dbReference>
<dbReference type="GO" id="GO:0000287">
    <property type="term" value="F:magnesium ion binding"/>
    <property type="evidence" value="ECO:0007669"/>
    <property type="project" value="UniProtKB-UniRule"/>
</dbReference>
<dbReference type="GO" id="GO:0006226">
    <property type="term" value="P:dUMP biosynthetic process"/>
    <property type="evidence" value="ECO:0007669"/>
    <property type="project" value="UniProtKB-UniRule"/>
</dbReference>
<dbReference type="GO" id="GO:0046081">
    <property type="term" value="P:dUTP catabolic process"/>
    <property type="evidence" value="ECO:0007669"/>
    <property type="project" value="InterPro"/>
</dbReference>
<dbReference type="CDD" id="cd07557">
    <property type="entry name" value="trimeric_dUTPase"/>
    <property type="match status" value="1"/>
</dbReference>
<dbReference type="FunFam" id="2.70.40.10:FF:000002">
    <property type="entry name" value="dUTP diphosphatase"/>
    <property type="match status" value="1"/>
</dbReference>
<dbReference type="Gene3D" id="2.70.40.10">
    <property type="match status" value="1"/>
</dbReference>
<dbReference type="HAMAP" id="MF_00116">
    <property type="entry name" value="dUTPase_bact"/>
    <property type="match status" value="1"/>
</dbReference>
<dbReference type="InterPro" id="IPR008181">
    <property type="entry name" value="dUTPase"/>
</dbReference>
<dbReference type="InterPro" id="IPR029054">
    <property type="entry name" value="dUTPase-like"/>
</dbReference>
<dbReference type="InterPro" id="IPR036157">
    <property type="entry name" value="dUTPase-like_sf"/>
</dbReference>
<dbReference type="InterPro" id="IPR033704">
    <property type="entry name" value="dUTPase_trimeric"/>
</dbReference>
<dbReference type="NCBIfam" id="TIGR00576">
    <property type="entry name" value="dut"/>
    <property type="match status" value="1"/>
</dbReference>
<dbReference type="NCBIfam" id="NF001862">
    <property type="entry name" value="PRK00601.1"/>
    <property type="match status" value="1"/>
</dbReference>
<dbReference type="PANTHER" id="PTHR11241">
    <property type="entry name" value="DEOXYURIDINE 5'-TRIPHOSPHATE NUCLEOTIDOHYDROLASE"/>
    <property type="match status" value="1"/>
</dbReference>
<dbReference type="PANTHER" id="PTHR11241:SF0">
    <property type="entry name" value="DEOXYURIDINE 5'-TRIPHOSPHATE NUCLEOTIDOHYDROLASE"/>
    <property type="match status" value="1"/>
</dbReference>
<dbReference type="Pfam" id="PF00692">
    <property type="entry name" value="dUTPase"/>
    <property type="match status" value="1"/>
</dbReference>
<dbReference type="SUPFAM" id="SSF51283">
    <property type="entry name" value="dUTPase-like"/>
    <property type="match status" value="1"/>
</dbReference>
<name>DUT_ECOUT</name>
<accession>Q1R4V2</accession>
<feature type="chain" id="PRO_1000057770" description="Deoxyuridine 5'-triphosphate nucleotidohydrolase">
    <location>
        <begin position="1"/>
        <end position="152"/>
    </location>
</feature>
<feature type="binding site" evidence="1">
    <location>
        <begin position="71"/>
        <end position="73"/>
    </location>
    <ligand>
        <name>substrate</name>
    </ligand>
</feature>
<feature type="binding site" evidence="1">
    <location>
        <position position="84"/>
    </location>
    <ligand>
        <name>substrate</name>
    </ligand>
</feature>
<feature type="binding site" evidence="1">
    <location>
        <begin position="88"/>
        <end position="90"/>
    </location>
    <ligand>
        <name>substrate</name>
    </ligand>
</feature>
<feature type="binding site" evidence="1">
    <location>
        <position position="98"/>
    </location>
    <ligand>
        <name>substrate</name>
    </ligand>
</feature>
<keyword id="KW-0378">Hydrolase</keyword>
<keyword id="KW-0460">Magnesium</keyword>
<keyword id="KW-0479">Metal-binding</keyword>
<keyword id="KW-0546">Nucleotide metabolism</keyword>
<gene>
    <name evidence="1" type="primary">dut</name>
    <name type="ordered locus">UTI89_C4184</name>
</gene>
<comment type="function">
    <text evidence="1">This enzyme is involved in nucleotide metabolism: it produces dUMP, the immediate precursor of thymidine nucleotides and it decreases the intracellular concentration of dUTP so that uracil cannot be incorporated into DNA.</text>
</comment>
<comment type="catalytic activity">
    <reaction evidence="1">
        <text>dUTP + H2O = dUMP + diphosphate + H(+)</text>
        <dbReference type="Rhea" id="RHEA:10248"/>
        <dbReference type="ChEBI" id="CHEBI:15377"/>
        <dbReference type="ChEBI" id="CHEBI:15378"/>
        <dbReference type="ChEBI" id="CHEBI:33019"/>
        <dbReference type="ChEBI" id="CHEBI:61555"/>
        <dbReference type="ChEBI" id="CHEBI:246422"/>
        <dbReference type="EC" id="3.6.1.23"/>
    </reaction>
</comment>
<comment type="cofactor">
    <cofactor evidence="1">
        <name>Mg(2+)</name>
        <dbReference type="ChEBI" id="CHEBI:18420"/>
    </cofactor>
</comment>
<comment type="pathway">
    <text evidence="1">Pyrimidine metabolism; dUMP biosynthesis; dUMP from dCTP (dUTP route): step 2/2.</text>
</comment>
<comment type="subunit">
    <text evidence="1">Homotrimer.</text>
</comment>
<comment type="similarity">
    <text evidence="1">Belongs to the dUTPase family.</text>
</comment>
<proteinExistence type="inferred from homology"/>
<sequence>MMKKIDVKILDPRVGKEFPLPTYATSGSAGLDLRACLDDAVELAPGDTTLVPTGLAIHIADPSLAAMMLPRSGLGHKHGIVLGNLVGLIDSDYQGQLMISVWNRGQDNFTIQPGERIAQMIFVPVVQAEFNLVEDFDATDRGEGGFGHSGRQ</sequence>
<organism>
    <name type="scientific">Escherichia coli (strain UTI89 / UPEC)</name>
    <dbReference type="NCBI Taxonomy" id="364106"/>
    <lineage>
        <taxon>Bacteria</taxon>
        <taxon>Pseudomonadati</taxon>
        <taxon>Pseudomonadota</taxon>
        <taxon>Gammaproteobacteria</taxon>
        <taxon>Enterobacterales</taxon>
        <taxon>Enterobacteriaceae</taxon>
        <taxon>Escherichia</taxon>
    </lineage>
</organism>
<reference key="1">
    <citation type="journal article" date="2006" name="Proc. Natl. Acad. Sci. U.S.A.">
        <title>Identification of genes subject to positive selection in uropathogenic strains of Escherichia coli: a comparative genomics approach.</title>
        <authorList>
            <person name="Chen S.L."/>
            <person name="Hung C.-S."/>
            <person name="Xu J."/>
            <person name="Reigstad C.S."/>
            <person name="Magrini V."/>
            <person name="Sabo A."/>
            <person name="Blasiar D."/>
            <person name="Bieri T."/>
            <person name="Meyer R.R."/>
            <person name="Ozersky P."/>
            <person name="Armstrong J.R."/>
            <person name="Fulton R.S."/>
            <person name="Latreille J.P."/>
            <person name="Spieth J."/>
            <person name="Hooton T.M."/>
            <person name="Mardis E.R."/>
            <person name="Hultgren S.J."/>
            <person name="Gordon J.I."/>
        </authorList>
    </citation>
    <scope>NUCLEOTIDE SEQUENCE [LARGE SCALE GENOMIC DNA]</scope>
    <source>
        <strain>UTI89 / UPEC</strain>
    </source>
</reference>
<protein>
    <recommendedName>
        <fullName evidence="1">Deoxyuridine 5'-triphosphate nucleotidohydrolase</fullName>
        <shortName evidence="1">dUTPase</shortName>
        <ecNumber evidence="1">3.6.1.23</ecNumber>
    </recommendedName>
    <alternativeName>
        <fullName evidence="1">dUTP pyrophosphatase</fullName>
    </alternativeName>
</protein>